<keyword id="KW-0067">ATP-binding</keyword>
<keyword id="KW-0967">Endosome</keyword>
<keyword id="KW-0276">Fatty acid metabolism</keyword>
<keyword id="KW-0436">Ligase</keyword>
<keyword id="KW-0443">Lipid metabolism</keyword>
<keyword id="KW-0472">Membrane</keyword>
<keyword id="KW-0547">Nucleotide-binding</keyword>
<keyword id="KW-1185">Reference proteome</keyword>
<protein>
    <recommendedName>
        <fullName>Fatty acyl-CoA synthetase A</fullName>
        <ecNumber>6.2.1.3</ecNumber>
    </recommendedName>
    <alternativeName>
        <fullName>Long chain fatty acyl coenzyme A-synthetase 1</fullName>
        <shortName>LC-FACS 1</shortName>
    </alternativeName>
    <alternativeName>
        <fullName>Long-chain-fatty-acid--CoA synthetase 1</fullName>
    </alternativeName>
</protein>
<proteinExistence type="evidence at protein level"/>
<sequence length="667" mass="74609">MSSLSTKTDLLGDPDFIRLQSVEVDGSEVIPGETRPRRNTKFPKLTNSPDGKTFTLYDVYRINKDSDSNFLGIRELLADGKRGDYKWISYKQACIRANNIGSALVQLGLNKGDRIGIFSINRPEWVLSDMAAMNHSLVPVALYATLGANAIEYVVNHSEISVLLCEGKNVEKILSMPGTTIKTIVSYDPLPQATLDKFKDNENVKLYLLSDFEKLGEQNPAQHEVPSPEDLCTLLYTSGSTGNPKGVMLTHTNMVSEVAGANFSPAGVIPEDVHMSYLPLAHSFERAVVSLMCYVGGQIGFFSGLIPELFNDIQVLRPTFLCGAPRVWQRLHDKLWFTVNNDSWLKKFLFNWGLNSKQSALRLGSTTPIWDKLVFSKTKDRLGGRVKFILSGSAPLDPKLAEFLRACFCCPVVSGYGLSENVGGASVAYPEDNNVGHVGPPLSACEMKLIDVPEMNYFSTDKPCPRGEVCIRGFNVFKGYFKDPEKTKEDLKEDGWFHTGDIGRWNENGTLSIIDRKKNIFKLSQGEYVAAEYLESVFVRSPFASQVFVYGDSLNSFLVGVVVPDFEVVQKLFASKYPELDVSNHATLAKSKELYKEILSSFDACAAEAKLHGFEKLKHIYVEHEPFTEENNLLTPSFKPKRPQLKERYQTIIDTLYAEYKRDHPDV</sequence>
<evidence type="ECO:0000269" key="1">
    <source>
    </source>
</evidence>
<evidence type="ECO:0000305" key="2"/>
<comment type="function">
    <text evidence="1">Long chain fatty acid acyl-CoA synthetases catalyze the formation of a thiester bond between a free fatty acid and coenzyme A during fatty acid metabolic process. May mediate fatty acid retrieval from the lumen of endosomes into the cytoplasm.</text>
</comment>
<comment type="catalytic activity">
    <reaction>
        <text>a long-chain fatty acid + ATP + CoA = a long-chain fatty acyl-CoA + AMP + diphosphate</text>
        <dbReference type="Rhea" id="RHEA:15421"/>
        <dbReference type="ChEBI" id="CHEBI:30616"/>
        <dbReference type="ChEBI" id="CHEBI:33019"/>
        <dbReference type="ChEBI" id="CHEBI:57287"/>
        <dbReference type="ChEBI" id="CHEBI:57560"/>
        <dbReference type="ChEBI" id="CHEBI:83139"/>
        <dbReference type="ChEBI" id="CHEBI:456215"/>
        <dbReference type="EC" id="6.2.1.3"/>
    </reaction>
</comment>
<comment type="subcellular location">
    <subcellularLocation>
        <location evidence="1">Endosome membrane</location>
        <topology evidence="1">Peripheral membrane protein</topology>
        <orientation evidence="1">Cytoplasmic side</orientation>
    </subcellularLocation>
    <text>Associates with endosomes a few minutes after their formation, remains bound through the acidic phase of endocytic maturation and dissociates early in the phase where the endosomal content is neutralized prior to exocytosis.</text>
</comment>
<comment type="developmental stage">
    <text evidence="1">Expressed at all stages of development.</text>
</comment>
<comment type="similarity">
    <text evidence="2">Belongs to the ATP-dependent AMP-binding enzyme family.</text>
</comment>
<name>FCSA_DICDI</name>
<gene>
    <name type="primary">fcsA</name>
    <name type="ORF">DDB_G0269242</name>
</gene>
<organism>
    <name type="scientific">Dictyostelium discoideum</name>
    <name type="common">Social amoeba</name>
    <dbReference type="NCBI Taxonomy" id="44689"/>
    <lineage>
        <taxon>Eukaryota</taxon>
        <taxon>Amoebozoa</taxon>
        <taxon>Evosea</taxon>
        <taxon>Eumycetozoa</taxon>
        <taxon>Dictyostelia</taxon>
        <taxon>Dictyosteliales</taxon>
        <taxon>Dictyosteliaceae</taxon>
        <taxon>Dictyostelium</taxon>
    </lineage>
</organism>
<feature type="chain" id="PRO_0000328558" description="Fatty acyl-CoA synthetase A">
    <location>
        <begin position="1"/>
        <end position="667"/>
    </location>
</feature>
<feature type="sequence conflict" description="In Ref. 1; AAO43007." evidence="2" ref="1">
    <original>K</original>
    <variation>T</variation>
    <location>
        <position position="199"/>
    </location>
</feature>
<accession>Q55DR6</accession>
<accession>Q86PL9</accession>
<dbReference type="EC" id="6.2.1.3"/>
<dbReference type="EMBL" id="AY196478">
    <property type="protein sequence ID" value="AAO43007.1"/>
    <property type="molecule type" value="mRNA"/>
</dbReference>
<dbReference type="EMBL" id="AAFI02000005">
    <property type="protein sequence ID" value="EAL71971.1"/>
    <property type="molecule type" value="Genomic_DNA"/>
</dbReference>
<dbReference type="RefSeq" id="XP_646065.1">
    <property type="nucleotide sequence ID" value="XM_640973.1"/>
</dbReference>
<dbReference type="SMR" id="Q55DR6"/>
<dbReference type="FunCoup" id="Q55DR6">
    <property type="interactions" value="306"/>
</dbReference>
<dbReference type="STRING" id="44689.Q55DR6"/>
<dbReference type="PaxDb" id="44689-DDB0191105"/>
<dbReference type="EnsemblProtists" id="EAL71971">
    <property type="protein sequence ID" value="EAL71971"/>
    <property type="gene ID" value="DDB_G0269242"/>
</dbReference>
<dbReference type="GeneID" id="8617013"/>
<dbReference type="KEGG" id="ddi:DDB_G0269242"/>
<dbReference type="dictyBase" id="DDB_G0269242">
    <property type="gene designation" value="fcsA"/>
</dbReference>
<dbReference type="VEuPathDB" id="AmoebaDB:DDB_G0269242"/>
<dbReference type="eggNOG" id="KOG1256">
    <property type="taxonomic scope" value="Eukaryota"/>
</dbReference>
<dbReference type="HOGENOM" id="CLU_000022_45_4_1"/>
<dbReference type="InParanoid" id="Q55DR6"/>
<dbReference type="OMA" id="IWHSYER"/>
<dbReference type="PhylomeDB" id="Q55DR6"/>
<dbReference type="Reactome" id="R-DDI-2046105">
    <property type="pathway name" value="Linoleic acid (LA) metabolism"/>
</dbReference>
<dbReference type="Reactome" id="R-DDI-2046106">
    <property type="pathway name" value="alpha-linolenic acid (ALA) metabolism"/>
</dbReference>
<dbReference type="Reactome" id="R-DDI-75876">
    <property type="pathway name" value="Synthesis of very long-chain fatty acyl-CoAs"/>
</dbReference>
<dbReference type="PRO" id="PR:Q55DR6"/>
<dbReference type="Proteomes" id="UP000002195">
    <property type="component" value="Chromosome 1"/>
</dbReference>
<dbReference type="GO" id="GO:0005737">
    <property type="term" value="C:cytoplasm"/>
    <property type="evidence" value="ECO:0000314"/>
    <property type="project" value="dictyBase"/>
</dbReference>
<dbReference type="GO" id="GO:0010009">
    <property type="term" value="C:cytoplasmic side of endosome membrane"/>
    <property type="evidence" value="ECO:0000314"/>
    <property type="project" value="dictyBase"/>
</dbReference>
<dbReference type="GO" id="GO:0005783">
    <property type="term" value="C:endoplasmic reticulum"/>
    <property type="evidence" value="ECO:0000318"/>
    <property type="project" value="GO_Central"/>
</dbReference>
<dbReference type="GO" id="GO:0005811">
    <property type="term" value="C:lipid droplet"/>
    <property type="evidence" value="ECO:0007005"/>
    <property type="project" value="dictyBase"/>
</dbReference>
<dbReference type="GO" id="GO:0016020">
    <property type="term" value="C:membrane"/>
    <property type="evidence" value="ECO:0000318"/>
    <property type="project" value="GO_Central"/>
</dbReference>
<dbReference type="GO" id="GO:0045335">
    <property type="term" value="C:phagocytic vesicle"/>
    <property type="evidence" value="ECO:0007005"/>
    <property type="project" value="dictyBase"/>
</dbReference>
<dbReference type="GO" id="GO:0005524">
    <property type="term" value="F:ATP binding"/>
    <property type="evidence" value="ECO:0007669"/>
    <property type="project" value="UniProtKB-KW"/>
</dbReference>
<dbReference type="GO" id="GO:0004467">
    <property type="term" value="F:long-chain fatty acid-CoA ligase activity"/>
    <property type="evidence" value="ECO:0000318"/>
    <property type="project" value="GO_Central"/>
</dbReference>
<dbReference type="GO" id="GO:0006631">
    <property type="term" value="P:fatty acid metabolic process"/>
    <property type="evidence" value="ECO:0000315"/>
    <property type="project" value="dictyBase"/>
</dbReference>
<dbReference type="GO" id="GO:0001676">
    <property type="term" value="P:long-chain fatty acid metabolic process"/>
    <property type="evidence" value="ECO:0000318"/>
    <property type="project" value="GO_Central"/>
</dbReference>
<dbReference type="CDD" id="cd05927">
    <property type="entry name" value="LC-FACS_euk"/>
    <property type="match status" value="1"/>
</dbReference>
<dbReference type="Gene3D" id="3.40.50.12780">
    <property type="entry name" value="N-terminal domain of ligase-like"/>
    <property type="match status" value="1"/>
</dbReference>
<dbReference type="InterPro" id="IPR020845">
    <property type="entry name" value="AMP-binding_CS"/>
</dbReference>
<dbReference type="InterPro" id="IPR000873">
    <property type="entry name" value="AMP-dep_synth/lig_dom"/>
</dbReference>
<dbReference type="InterPro" id="IPR042099">
    <property type="entry name" value="ANL_N_sf"/>
</dbReference>
<dbReference type="InterPro" id="IPR045311">
    <property type="entry name" value="LC-FACS_euk"/>
</dbReference>
<dbReference type="PANTHER" id="PTHR43272:SF33">
    <property type="entry name" value="AMP-BINDING DOMAIN-CONTAINING PROTEIN-RELATED"/>
    <property type="match status" value="1"/>
</dbReference>
<dbReference type="PANTHER" id="PTHR43272">
    <property type="entry name" value="LONG-CHAIN-FATTY-ACID--COA LIGASE"/>
    <property type="match status" value="1"/>
</dbReference>
<dbReference type="Pfam" id="PF00501">
    <property type="entry name" value="AMP-binding"/>
    <property type="match status" value="1"/>
</dbReference>
<dbReference type="SUPFAM" id="SSF56801">
    <property type="entry name" value="Acetyl-CoA synthetase-like"/>
    <property type="match status" value="1"/>
</dbReference>
<dbReference type="PROSITE" id="PS00455">
    <property type="entry name" value="AMP_BINDING"/>
    <property type="match status" value="1"/>
</dbReference>
<reference key="1">
    <citation type="journal article" date="2003" name="Eur. J. Cell Biol.">
        <title>A Dictyostelium long chain fatty acyl coenzyme A-synthetase mediates fatty acid retrieval from endosomes.</title>
        <authorList>
            <person name="von Loehneysen K."/>
            <person name="Pawolleck N."/>
            <person name="Ruehling H."/>
            <person name="Maniak M."/>
        </authorList>
    </citation>
    <scope>NUCLEOTIDE SEQUENCE [MRNA]</scope>
    <scope>FUNCTION</scope>
    <scope>SUBCELLULAR LOCATION</scope>
    <scope>DEVELOPMENTAL STAGE</scope>
</reference>
<reference key="2">
    <citation type="journal article" date="2005" name="Nature">
        <title>The genome of the social amoeba Dictyostelium discoideum.</title>
        <authorList>
            <person name="Eichinger L."/>
            <person name="Pachebat J.A."/>
            <person name="Gloeckner G."/>
            <person name="Rajandream M.A."/>
            <person name="Sucgang R."/>
            <person name="Berriman M."/>
            <person name="Song J."/>
            <person name="Olsen R."/>
            <person name="Szafranski K."/>
            <person name="Xu Q."/>
            <person name="Tunggal B."/>
            <person name="Kummerfeld S."/>
            <person name="Madera M."/>
            <person name="Konfortov B.A."/>
            <person name="Rivero F."/>
            <person name="Bankier A.T."/>
            <person name="Lehmann R."/>
            <person name="Hamlin N."/>
            <person name="Davies R."/>
            <person name="Gaudet P."/>
            <person name="Fey P."/>
            <person name="Pilcher K."/>
            <person name="Chen G."/>
            <person name="Saunders D."/>
            <person name="Sodergren E.J."/>
            <person name="Davis P."/>
            <person name="Kerhornou A."/>
            <person name="Nie X."/>
            <person name="Hall N."/>
            <person name="Anjard C."/>
            <person name="Hemphill L."/>
            <person name="Bason N."/>
            <person name="Farbrother P."/>
            <person name="Desany B."/>
            <person name="Just E."/>
            <person name="Morio T."/>
            <person name="Rost R."/>
            <person name="Churcher C.M."/>
            <person name="Cooper J."/>
            <person name="Haydock S."/>
            <person name="van Driessche N."/>
            <person name="Cronin A."/>
            <person name="Goodhead I."/>
            <person name="Muzny D.M."/>
            <person name="Mourier T."/>
            <person name="Pain A."/>
            <person name="Lu M."/>
            <person name="Harper D."/>
            <person name="Lindsay R."/>
            <person name="Hauser H."/>
            <person name="James K.D."/>
            <person name="Quiles M."/>
            <person name="Madan Babu M."/>
            <person name="Saito T."/>
            <person name="Buchrieser C."/>
            <person name="Wardroper A."/>
            <person name="Felder M."/>
            <person name="Thangavelu M."/>
            <person name="Johnson D."/>
            <person name="Knights A."/>
            <person name="Loulseged H."/>
            <person name="Mungall K.L."/>
            <person name="Oliver K."/>
            <person name="Price C."/>
            <person name="Quail M.A."/>
            <person name="Urushihara H."/>
            <person name="Hernandez J."/>
            <person name="Rabbinowitsch E."/>
            <person name="Steffen D."/>
            <person name="Sanders M."/>
            <person name="Ma J."/>
            <person name="Kohara Y."/>
            <person name="Sharp S."/>
            <person name="Simmonds M.N."/>
            <person name="Spiegler S."/>
            <person name="Tivey A."/>
            <person name="Sugano S."/>
            <person name="White B."/>
            <person name="Walker D."/>
            <person name="Woodward J.R."/>
            <person name="Winckler T."/>
            <person name="Tanaka Y."/>
            <person name="Shaulsky G."/>
            <person name="Schleicher M."/>
            <person name="Weinstock G.M."/>
            <person name="Rosenthal A."/>
            <person name="Cox E.C."/>
            <person name="Chisholm R.L."/>
            <person name="Gibbs R.A."/>
            <person name="Loomis W.F."/>
            <person name="Platzer M."/>
            <person name="Kay R.R."/>
            <person name="Williams J.G."/>
            <person name="Dear P.H."/>
            <person name="Noegel A.A."/>
            <person name="Barrell B.G."/>
            <person name="Kuspa A."/>
        </authorList>
    </citation>
    <scope>NUCLEOTIDE SEQUENCE [LARGE SCALE GENOMIC DNA]</scope>
    <source>
        <strain>AX4</strain>
    </source>
</reference>
<reference key="3">
    <citation type="journal article" date="2006" name="Mol. Cell. Proteomics">
        <title>Proteomics fingerprinting of phagosome maturation and evidence for the role of a Galpha during uptake.</title>
        <authorList>
            <person name="Gotthardt D."/>
            <person name="Blancheteau V."/>
            <person name="Bosserhoff A."/>
            <person name="Ruppert T."/>
            <person name="Delorenzi M."/>
            <person name="Soldati T."/>
        </authorList>
    </citation>
    <scope>IDENTIFICATION BY MASS SPECTROMETRY [LARGE SCALE ANALYSIS]</scope>
    <source>
        <strain>AX2</strain>
    </source>
</reference>